<name>Y1030_HAEIN</name>
<accession>P44994</accession>
<evidence type="ECO:0000255" key="1"/>
<evidence type="ECO:0000305" key="2"/>
<reference key="1">
    <citation type="journal article" date="1995" name="Science">
        <title>Whole-genome random sequencing and assembly of Haemophilus influenzae Rd.</title>
        <authorList>
            <person name="Fleischmann R.D."/>
            <person name="Adams M.D."/>
            <person name="White O."/>
            <person name="Clayton R.A."/>
            <person name="Kirkness E.F."/>
            <person name="Kerlavage A.R."/>
            <person name="Bult C.J."/>
            <person name="Tomb J.-F."/>
            <person name="Dougherty B.A."/>
            <person name="Merrick J.M."/>
            <person name="McKenney K."/>
            <person name="Sutton G.G."/>
            <person name="FitzHugh W."/>
            <person name="Fields C.A."/>
            <person name="Gocayne J.D."/>
            <person name="Scott J.D."/>
            <person name="Shirley R."/>
            <person name="Liu L.-I."/>
            <person name="Glodek A."/>
            <person name="Kelley J.M."/>
            <person name="Weidman J.F."/>
            <person name="Phillips C.A."/>
            <person name="Spriggs T."/>
            <person name="Hedblom E."/>
            <person name="Cotton M.D."/>
            <person name="Utterback T.R."/>
            <person name="Hanna M.C."/>
            <person name="Nguyen D.T."/>
            <person name="Saudek D.M."/>
            <person name="Brandon R.C."/>
            <person name="Fine L.D."/>
            <person name="Fritchman J.L."/>
            <person name="Fuhrmann J.L."/>
            <person name="Geoghagen N.S.M."/>
            <person name="Gnehm C.L."/>
            <person name="McDonald L.A."/>
            <person name="Small K.V."/>
            <person name="Fraser C.M."/>
            <person name="Smith H.O."/>
            <person name="Venter J.C."/>
        </authorList>
    </citation>
    <scope>NUCLEOTIDE SEQUENCE [LARGE SCALE GENOMIC DNA]</scope>
    <source>
        <strain>ATCC 51907 / DSM 11121 / KW20 / Rd</strain>
    </source>
</reference>
<dbReference type="EMBL" id="L42023">
    <property type="protein sequence ID" value="AAC22690.1"/>
    <property type="molecule type" value="Genomic_DNA"/>
</dbReference>
<dbReference type="PIR" id="B64165">
    <property type="entry name" value="B64165"/>
</dbReference>
<dbReference type="RefSeq" id="NP_439190.1">
    <property type="nucleotide sequence ID" value="NC_000907.1"/>
</dbReference>
<dbReference type="SMR" id="P44994"/>
<dbReference type="STRING" id="71421.HI_1030"/>
<dbReference type="EnsemblBacteria" id="AAC22690">
    <property type="protein sequence ID" value="AAC22690"/>
    <property type="gene ID" value="HI_1030"/>
</dbReference>
<dbReference type="KEGG" id="hin:HI_1030"/>
<dbReference type="PATRIC" id="fig|71421.8.peg.1074"/>
<dbReference type="eggNOG" id="COG3090">
    <property type="taxonomic scope" value="Bacteria"/>
</dbReference>
<dbReference type="HOGENOM" id="CLU_086356_9_0_6"/>
<dbReference type="OrthoDB" id="9791324at2"/>
<dbReference type="PhylomeDB" id="P44994"/>
<dbReference type="BioCyc" id="HINF71421:G1GJ1-1070-MONOMER"/>
<dbReference type="Proteomes" id="UP000000579">
    <property type="component" value="Chromosome"/>
</dbReference>
<dbReference type="GO" id="GO:0005886">
    <property type="term" value="C:plasma membrane"/>
    <property type="evidence" value="ECO:0000318"/>
    <property type="project" value="GO_Central"/>
</dbReference>
<dbReference type="GO" id="GO:0022857">
    <property type="term" value="F:transmembrane transporter activity"/>
    <property type="evidence" value="ECO:0000318"/>
    <property type="project" value="GO_Central"/>
</dbReference>
<dbReference type="GO" id="GO:0015740">
    <property type="term" value="P:C4-dicarboxylate transport"/>
    <property type="evidence" value="ECO:0000318"/>
    <property type="project" value="GO_Central"/>
</dbReference>
<dbReference type="InterPro" id="IPR055348">
    <property type="entry name" value="DctQ"/>
</dbReference>
<dbReference type="InterPro" id="IPR007387">
    <property type="entry name" value="TRAP_DctQ"/>
</dbReference>
<dbReference type="PANTHER" id="PTHR35011">
    <property type="entry name" value="2,3-DIKETO-L-GULONATE TRAP TRANSPORTER SMALL PERMEASE PROTEIN YIAM"/>
    <property type="match status" value="1"/>
</dbReference>
<dbReference type="PANTHER" id="PTHR35011:SF2">
    <property type="entry name" value="2,3-DIKETO-L-GULONATE TRAP TRANSPORTER SMALL PERMEASE PROTEIN YIAM"/>
    <property type="match status" value="1"/>
</dbReference>
<dbReference type="Pfam" id="PF04290">
    <property type="entry name" value="DctQ"/>
    <property type="match status" value="1"/>
</dbReference>
<sequence>MMRSLAHFINKALEILCISILALMSILVFLNVVLRYGFNSGISITEEISRYLFIWLAFLGAVLAFNENQHVSVTVLVNKLPPFGQAILKFITDMMMLICCYLIIEGSWIQFQLNLNNFAPISGLPQGLTYFASVIAGILVSAILITRLISTIFFIFRGEVK</sequence>
<protein>
    <recommendedName>
        <fullName>Putative TRAP transporter small permease protein HI_1030</fullName>
    </recommendedName>
</protein>
<gene>
    <name type="ordered locus">HI_1030</name>
</gene>
<feature type="chain" id="PRO_0000169596" description="Putative TRAP transporter small permease protein HI_1030">
    <location>
        <begin position="1"/>
        <end position="161"/>
    </location>
</feature>
<feature type="transmembrane region" description="Helical" evidence="1">
    <location>
        <begin position="13"/>
        <end position="33"/>
    </location>
</feature>
<feature type="transmembrane region" description="Helical" evidence="1">
    <location>
        <begin position="51"/>
        <end position="71"/>
    </location>
</feature>
<feature type="transmembrane region" description="Helical" evidence="1">
    <location>
        <begin position="86"/>
        <end position="106"/>
    </location>
</feature>
<feature type="transmembrane region" description="Helical" evidence="1">
    <location>
        <begin position="135"/>
        <end position="155"/>
    </location>
</feature>
<organism>
    <name type="scientific">Haemophilus influenzae (strain ATCC 51907 / DSM 11121 / KW20 / Rd)</name>
    <dbReference type="NCBI Taxonomy" id="71421"/>
    <lineage>
        <taxon>Bacteria</taxon>
        <taxon>Pseudomonadati</taxon>
        <taxon>Pseudomonadota</taxon>
        <taxon>Gammaproteobacteria</taxon>
        <taxon>Pasteurellales</taxon>
        <taxon>Pasteurellaceae</taxon>
        <taxon>Haemophilus</taxon>
    </lineage>
</organism>
<proteinExistence type="inferred from homology"/>
<keyword id="KW-0997">Cell inner membrane</keyword>
<keyword id="KW-1003">Cell membrane</keyword>
<keyword id="KW-0472">Membrane</keyword>
<keyword id="KW-1185">Reference proteome</keyword>
<keyword id="KW-0812">Transmembrane</keyword>
<keyword id="KW-1133">Transmembrane helix</keyword>
<keyword id="KW-0813">Transport</keyword>
<comment type="subcellular location">
    <subcellularLocation>
        <location evidence="2">Cell inner membrane</location>
        <topology evidence="2">Multi-pass membrane protein</topology>
    </subcellularLocation>
</comment>
<comment type="similarity">
    <text evidence="2">Belongs to the TRAP transporter small permease family.</text>
</comment>